<evidence type="ECO:0000250" key="1"/>
<evidence type="ECO:0000305" key="2"/>
<evidence type="ECO:0007829" key="3">
    <source>
        <dbReference type="PDB" id="7AZQ"/>
    </source>
</evidence>
<dbReference type="EC" id="1.15.1.1"/>
<dbReference type="EMBL" id="AF022931">
    <property type="protein sequence ID" value="AAC64207.1"/>
    <property type="molecule type" value="Genomic_DNA"/>
</dbReference>
<dbReference type="RefSeq" id="WP_074556057.1">
    <property type="nucleotide sequence ID" value="NZ_CP119563.1"/>
</dbReference>
<dbReference type="PDB" id="7AZQ">
    <property type="method" value="X-ray"/>
    <property type="resolution" value="2.00 A"/>
    <property type="chains" value="A/E=2-200"/>
</dbReference>
<dbReference type="PDB" id="7AZR">
    <property type="method" value="X-ray"/>
    <property type="resolution" value="2.10 A"/>
    <property type="chains" value="A/E=2-200"/>
</dbReference>
<dbReference type="PDBsum" id="7AZQ"/>
<dbReference type="PDBsum" id="7AZR"/>
<dbReference type="SMR" id="O30970"/>
<dbReference type="OrthoDB" id="9803125at2"/>
<dbReference type="BRENDA" id="1.15.1.1">
    <property type="organism ID" value="5381"/>
</dbReference>
<dbReference type="GO" id="GO:0046872">
    <property type="term" value="F:metal ion binding"/>
    <property type="evidence" value="ECO:0007669"/>
    <property type="project" value="UniProtKB-KW"/>
</dbReference>
<dbReference type="GO" id="GO:0004784">
    <property type="term" value="F:superoxide dismutase activity"/>
    <property type="evidence" value="ECO:0007669"/>
    <property type="project" value="UniProtKB-EC"/>
</dbReference>
<dbReference type="FunFam" id="1.10.287.990:FF:000002">
    <property type="entry name" value="Superoxide dismutase"/>
    <property type="match status" value="1"/>
</dbReference>
<dbReference type="Gene3D" id="1.10.287.990">
    <property type="entry name" value="Fe,Mn superoxide dismutase (SOD) domain"/>
    <property type="match status" value="1"/>
</dbReference>
<dbReference type="Gene3D" id="3.55.40.20">
    <property type="entry name" value="Iron/manganese superoxide dismutase, C-terminal domain"/>
    <property type="match status" value="1"/>
</dbReference>
<dbReference type="InterPro" id="IPR001189">
    <property type="entry name" value="Mn/Fe_SOD"/>
</dbReference>
<dbReference type="InterPro" id="IPR019833">
    <property type="entry name" value="Mn/Fe_SOD_BS"/>
</dbReference>
<dbReference type="InterPro" id="IPR019832">
    <property type="entry name" value="Mn/Fe_SOD_C"/>
</dbReference>
<dbReference type="InterPro" id="IPR019831">
    <property type="entry name" value="Mn/Fe_SOD_N"/>
</dbReference>
<dbReference type="InterPro" id="IPR036324">
    <property type="entry name" value="Mn/Fe_SOD_N_sf"/>
</dbReference>
<dbReference type="InterPro" id="IPR036314">
    <property type="entry name" value="SOD_C_sf"/>
</dbReference>
<dbReference type="PANTHER" id="PTHR42769">
    <property type="entry name" value="SUPEROXIDE DISMUTASE"/>
    <property type="match status" value="1"/>
</dbReference>
<dbReference type="PANTHER" id="PTHR42769:SF3">
    <property type="entry name" value="SUPEROXIDE DISMUTASE [FE] 2, CHLOROPLASTIC"/>
    <property type="match status" value="1"/>
</dbReference>
<dbReference type="Pfam" id="PF02777">
    <property type="entry name" value="Sod_Fe_C"/>
    <property type="match status" value="1"/>
</dbReference>
<dbReference type="Pfam" id="PF00081">
    <property type="entry name" value="Sod_Fe_N"/>
    <property type="match status" value="1"/>
</dbReference>
<dbReference type="PIRSF" id="PIRSF000349">
    <property type="entry name" value="SODismutase"/>
    <property type="match status" value="1"/>
</dbReference>
<dbReference type="PRINTS" id="PR01703">
    <property type="entry name" value="MNSODISMTASE"/>
</dbReference>
<dbReference type="SUPFAM" id="SSF54719">
    <property type="entry name" value="Fe,Mn superoxide dismutase (SOD), C-terminal domain"/>
    <property type="match status" value="1"/>
</dbReference>
<dbReference type="SUPFAM" id="SSF46609">
    <property type="entry name" value="Fe,Mn superoxide dismutase (SOD), N-terminal domain"/>
    <property type="match status" value="1"/>
</dbReference>
<dbReference type="PROSITE" id="PS00088">
    <property type="entry name" value="SOD_MN"/>
    <property type="match status" value="1"/>
</dbReference>
<organism>
    <name type="scientific">Rhodobacter capsulatus</name>
    <name type="common">Rhodopseudomonas capsulata</name>
    <dbReference type="NCBI Taxonomy" id="1061"/>
    <lineage>
        <taxon>Bacteria</taxon>
        <taxon>Pseudomonadati</taxon>
        <taxon>Pseudomonadota</taxon>
        <taxon>Alphaproteobacteria</taxon>
        <taxon>Rhodobacterales</taxon>
        <taxon>Rhodobacter group</taxon>
        <taxon>Rhodobacter</taxon>
    </lineage>
</organism>
<accession>O30970</accession>
<protein>
    <recommendedName>
        <fullName>Superoxide dismutase [Fe]</fullName>
        <ecNumber>1.15.1.1</ecNumber>
    </recommendedName>
</protein>
<sequence length="200" mass="22122">MAFELPALPYAHDALASLGMSKETLEYHHDLHHKAYVDNGNKLIAGTEWEGKSVEEIVKGTYCAGAVAQSGIFNNASQHWNHAQFWEMMGPGEDKKMPGALEKALVESFGSVAKFKEDFAAAGAGQFGSGWAWLVKDSDGALKITKTENGVNPLCFGQTALLGCDVWEHSYYIDFRNKRPAYLTNFLDKLVNWENVASRM</sequence>
<reference key="1">
    <citation type="journal article" date="1998" name="J. Bacteriol.">
        <title>Molecular cloning and expression analysis of the Rhodobacter capsulatus sodB gene, encoding an iron superoxide dismutase.</title>
        <authorList>
            <person name="Cortez N."/>
            <person name="Carrillo N."/>
            <person name="Pasternak C."/>
            <person name="Balzer A."/>
            <person name="Klug G."/>
        </authorList>
    </citation>
    <scope>NUCLEOTIDE SEQUENCE [GENOMIC DNA]</scope>
    <scope>CHARACTERIZATION</scope>
    <source>
        <strain>DSM 938 / 37b4</strain>
    </source>
</reference>
<feature type="chain" id="PRO_0000160000" description="Superoxide dismutase [Fe]">
    <location>
        <begin position="1"/>
        <end position="200"/>
    </location>
</feature>
<feature type="binding site" evidence="1">
    <location>
        <position position="28"/>
    </location>
    <ligand>
        <name>Fe cation</name>
        <dbReference type="ChEBI" id="CHEBI:24875"/>
    </ligand>
</feature>
<feature type="binding site" evidence="1">
    <location>
        <position position="82"/>
    </location>
    <ligand>
        <name>Fe cation</name>
        <dbReference type="ChEBI" id="CHEBI:24875"/>
    </ligand>
</feature>
<feature type="binding site" evidence="1">
    <location>
        <position position="165"/>
    </location>
    <ligand>
        <name>Fe cation</name>
        <dbReference type="ChEBI" id="CHEBI:24875"/>
    </ligand>
</feature>
<feature type="binding site" evidence="1">
    <location>
        <position position="169"/>
    </location>
    <ligand>
        <name>Fe cation</name>
        <dbReference type="ChEBI" id="CHEBI:24875"/>
    </ligand>
</feature>
<feature type="turn" evidence="3">
    <location>
        <begin position="12"/>
        <end position="15"/>
    </location>
</feature>
<feature type="helix" evidence="3">
    <location>
        <begin position="16"/>
        <end position="18"/>
    </location>
</feature>
<feature type="helix" evidence="3">
    <location>
        <begin position="22"/>
        <end position="30"/>
    </location>
</feature>
<feature type="helix" evidence="3">
    <location>
        <begin position="32"/>
        <end position="44"/>
    </location>
</feature>
<feature type="turn" evidence="3">
    <location>
        <begin position="48"/>
        <end position="51"/>
    </location>
</feature>
<feature type="helix" evidence="3">
    <location>
        <begin position="54"/>
        <end position="61"/>
    </location>
</feature>
<feature type="helix" evidence="3">
    <location>
        <begin position="71"/>
        <end position="88"/>
    </location>
</feature>
<feature type="helix" evidence="3">
    <location>
        <begin position="99"/>
        <end position="109"/>
    </location>
</feature>
<feature type="helix" evidence="3">
    <location>
        <begin position="112"/>
        <end position="125"/>
    </location>
</feature>
<feature type="strand" evidence="3">
    <location>
        <begin position="128"/>
        <end position="136"/>
    </location>
</feature>
<feature type="strand" evidence="3">
    <location>
        <begin position="142"/>
        <end position="148"/>
    </location>
</feature>
<feature type="helix" evidence="3">
    <location>
        <begin position="153"/>
        <end position="156"/>
    </location>
</feature>
<feature type="strand" evidence="3">
    <location>
        <begin position="159"/>
        <end position="165"/>
    </location>
</feature>
<feature type="helix" evidence="3">
    <location>
        <begin position="168"/>
        <end position="170"/>
    </location>
</feature>
<feature type="helix" evidence="3">
    <location>
        <begin position="172"/>
        <end position="175"/>
    </location>
</feature>
<feature type="helix" evidence="3">
    <location>
        <begin position="179"/>
        <end position="189"/>
    </location>
</feature>
<feature type="helix" evidence="3">
    <location>
        <begin position="193"/>
        <end position="198"/>
    </location>
</feature>
<gene>
    <name type="primary">sodB</name>
    <name type="synonym">sod</name>
</gene>
<name>SODF_RHOCA</name>
<comment type="function">
    <text>Destroys superoxide anion radicals which are normally produced within the cells and which are toxic to biological systems.</text>
</comment>
<comment type="catalytic activity">
    <reaction>
        <text>2 superoxide + 2 H(+) = H2O2 + O2</text>
        <dbReference type="Rhea" id="RHEA:20696"/>
        <dbReference type="ChEBI" id="CHEBI:15378"/>
        <dbReference type="ChEBI" id="CHEBI:15379"/>
        <dbReference type="ChEBI" id="CHEBI:16240"/>
        <dbReference type="ChEBI" id="CHEBI:18421"/>
        <dbReference type="EC" id="1.15.1.1"/>
    </reaction>
</comment>
<comment type="cofactor">
    <cofactor evidence="1">
        <name>Fe cation</name>
        <dbReference type="ChEBI" id="CHEBI:24875"/>
    </cofactor>
    <text evidence="1">Binds 1 Fe cation per subunit.</text>
</comment>
<comment type="subunit">
    <text evidence="1">Homodimer.</text>
</comment>
<comment type="similarity">
    <text evidence="2">Belongs to the iron/manganese superoxide dismutase family.</text>
</comment>
<keyword id="KW-0002">3D-structure</keyword>
<keyword id="KW-0408">Iron</keyword>
<keyword id="KW-0479">Metal-binding</keyword>
<keyword id="KW-0560">Oxidoreductase</keyword>
<proteinExistence type="evidence at protein level"/>